<evidence type="ECO:0000255" key="1"/>
<evidence type="ECO:0000256" key="2">
    <source>
        <dbReference type="SAM" id="MobiDB-lite"/>
    </source>
</evidence>
<evidence type="ECO:0000269" key="3">
    <source>
    </source>
</evidence>
<evidence type="ECO:0000303" key="4">
    <source>
    </source>
</evidence>
<evidence type="ECO:0000305" key="5"/>
<evidence type="ECO:0000312" key="6">
    <source>
        <dbReference type="EMBL" id="CCA30519.1"/>
    </source>
</evidence>
<name>KASST_PHLMA</name>
<dbReference type="EMBL" id="FR837931">
    <property type="protein sequence ID" value="CCA30519.1"/>
    <property type="molecule type" value="mRNA"/>
</dbReference>
<dbReference type="GO" id="GO:0005576">
    <property type="term" value="C:extracellular region"/>
    <property type="evidence" value="ECO:0007669"/>
    <property type="project" value="UniProtKB-SubCell"/>
</dbReference>
<dbReference type="GO" id="GO:0042742">
    <property type="term" value="P:defense response to bacterium"/>
    <property type="evidence" value="ECO:0007669"/>
    <property type="project" value="UniProtKB-KW"/>
</dbReference>
<dbReference type="GO" id="GO:0031640">
    <property type="term" value="P:killing of cells of another organism"/>
    <property type="evidence" value="ECO:0007669"/>
    <property type="project" value="UniProtKB-KW"/>
</dbReference>
<dbReference type="GO" id="GO:0042310">
    <property type="term" value="P:vasoconstriction"/>
    <property type="evidence" value="ECO:0007669"/>
    <property type="project" value="UniProtKB-KW"/>
</dbReference>
<dbReference type="InterPro" id="IPR004275">
    <property type="entry name" value="Frog_antimicrobial_propeptide"/>
</dbReference>
<dbReference type="Pfam" id="PF03032">
    <property type="entry name" value="FSAP_sig_propep"/>
    <property type="match status" value="1"/>
</dbReference>
<sequence length="68" mass="7700">MMKKSMLLLFFLGMVSFSLADDKREDEGEEKRADEGEEKRAAEEKRFIKELLPHLSGIIDSVANAIKG</sequence>
<comment type="function">
    <text evidence="3">Peptide with potent vasoconstrictor properties (EC50=25 pM). Has moderate antimicrobial activity against Gram-positive bacterium S.aureus (MIC=55 uM) and against Gram-negative bacterium E.coli (MIC=110 uM). Not active against fungus C.albicans. Has weak hemolytic activity against horse erythrocytes.</text>
</comment>
<comment type="subcellular location">
    <subcellularLocation>
        <location evidence="3">Secreted</location>
    </subcellularLocation>
</comment>
<comment type="tissue specificity">
    <text evidence="3">Expressed by the skin dorsal glands.</text>
</comment>
<comment type="mass spectrometry" mass="2279.76" method="Electrospray" evidence="3"/>
<comment type="miscellaneous">
    <text evidence="3">Kasstasin is a derivation of Kassina, the taxon of origin, and the Ancient Greek word 'stasis' meaning 'stoppage of flow'.</text>
</comment>
<comment type="similarity">
    <text evidence="1">Belongs to the frog skin active peptide (FSAP) family. Brevinin subfamily.</text>
</comment>
<reference evidence="5 6" key="1">
    <citation type="journal article" date="2011" name="Biochimie">
        <title>Kasstasin: A novel potent vasoconstrictor peptide from the skin secretion of the African red-legged running frog, Kassina maculata.</title>
        <authorList>
            <person name="Li X."/>
            <person name="Feng W."/>
            <person name="Zhou M."/>
            <person name="Ma C."/>
            <person name="Chen T."/>
            <person name="Zeller M."/>
            <person name="Hornshaw M."/>
            <person name="Wang L."/>
            <person name="Shaw C."/>
        </authorList>
    </citation>
    <scope>NUCLEOTIDE SEQUENCE [MRNA]</scope>
    <scope>PROTEIN SEQUENCE OF 47-67</scope>
    <scope>FUNCTION</scope>
    <scope>SUBCELLULAR LOCATION</scope>
    <scope>TISSUE SPECIFICITY</scope>
    <scope>AMIDATION AT LYS-67</scope>
    <scope>MASS SPECTROMETRY</scope>
    <source>
        <tissue evidence="3">Skin secretion</tissue>
    </source>
</reference>
<keyword id="KW-0027">Amidation</keyword>
<keyword id="KW-0878">Amphibian defense peptide</keyword>
<keyword id="KW-0044">Antibiotic</keyword>
<keyword id="KW-0929">Antimicrobial</keyword>
<keyword id="KW-0165">Cleavage on pair of basic residues</keyword>
<keyword id="KW-0204">Cytolysis</keyword>
<keyword id="KW-0903">Direct protein sequencing</keyword>
<keyword id="KW-0354">Hemolysis</keyword>
<keyword id="KW-0964">Secreted</keyword>
<keyword id="KW-0732">Signal</keyword>
<keyword id="KW-0838">Vasoactive</keyword>
<keyword id="KW-0839">Vasoconstrictor</keyword>
<protein>
    <recommendedName>
        <fullName evidence="6">Kasstasin</fullName>
    </recommendedName>
</protein>
<proteinExistence type="evidence at protein level"/>
<organism>
    <name type="scientific">Phlyctimantis maculatus</name>
    <name type="common">Red-legged running frog</name>
    <name type="synonym">Hylambates maculatus</name>
    <dbReference type="NCBI Taxonomy" id="2517390"/>
    <lineage>
        <taxon>Eukaryota</taxon>
        <taxon>Metazoa</taxon>
        <taxon>Chordata</taxon>
        <taxon>Craniata</taxon>
        <taxon>Vertebrata</taxon>
        <taxon>Euteleostomi</taxon>
        <taxon>Amphibia</taxon>
        <taxon>Batrachia</taxon>
        <taxon>Anura</taxon>
        <taxon>Neobatrachia</taxon>
        <taxon>Microhyloidea</taxon>
        <taxon>Hyperoliidae</taxon>
        <taxon>Kassina</taxon>
    </lineage>
</organism>
<feature type="signal peptide" evidence="1">
    <location>
        <begin position="1"/>
        <end position="20"/>
    </location>
</feature>
<feature type="propeptide" id="PRO_5000783568" evidence="1 4">
    <location>
        <begin position="21"/>
        <end position="44"/>
    </location>
</feature>
<feature type="peptide" id="PRO_5000783569" description="Kasstasin" evidence="3">
    <location>
        <begin position="47"/>
        <end position="67"/>
    </location>
</feature>
<feature type="region of interest" description="Disordered" evidence="2">
    <location>
        <begin position="22"/>
        <end position="41"/>
    </location>
</feature>
<feature type="modified residue" description="Lysine amide" evidence="3">
    <location>
        <position position="67"/>
    </location>
</feature>
<accession>G0LWV9</accession>